<protein>
    <recommendedName>
        <fullName>Taste receptor type 2 member 16</fullName>
        <shortName>T2R16</shortName>
    </recommendedName>
</protein>
<dbReference type="EMBL" id="AY724993">
    <property type="protein sequence ID" value="AAU21178.1"/>
    <property type="molecule type" value="Genomic_DNA"/>
</dbReference>
<dbReference type="RefSeq" id="XP_054352684.1">
    <property type="nucleotide sequence ID" value="XM_054496709.1"/>
</dbReference>
<dbReference type="SMR" id="Q645U1"/>
<dbReference type="GlyCosmos" id="Q645U1">
    <property type="glycosylation" value="2 sites, No reported glycans"/>
</dbReference>
<dbReference type="GeneID" id="129041277"/>
<dbReference type="GO" id="GO:0005886">
    <property type="term" value="C:plasma membrane"/>
    <property type="evidence" value="ECO:0007669"/>
    <property type="project" value="UniProtKB-SubCell"/>
</dbReference>
<dbReference type="GO" id="GO:0033038">
    <property type="term" value="F:bitter taste receptor activity"/>
    <property type="evidence" value="ECO:0007669"/>
    <property type="project" value="InterPro"/>
</dbReference>
<dbReference type="GO" id="GO:0004930">
    <property type="term" value="F:G protein-coupled receptor activity"/>
    <property type="evidence" value="ECO:0007669"/>
    <property type="project" value="UniProtKB-KW"/>
</dbReference>
<dbReference type="CDD" id="cd15017">
    <property type="entry name" value="7tm_TAS2R16"/>
    <property type="match status" value="1"/>
</dbReference>
<dbReference type="FunFam" id="1.20.1070.10:FF:000055">
    <property type="entry name" value="Taste receptor type 2"/>
    <property type="match status" value="1"/>
</dbReference>
<dbReference type="InterPro" id="IPR007960">
    <property type="entry name" value="TAS2R"/>
</dbReference>
<dbReference type="PANTHER" id="PTHR11394">
    <property type="entry name" value="TASTE RECEPTOR TYPE 2"/>
    <property type="match status" value="1"/>
</dbReference>
<dbReference type="PANTHER" id="PTHR11394:SF68">
    <property type="entry name" value="TASTE RECEPTOR TYPE 2 MEMBER 16"/>
    <property type="match status" value="1"/>
</dbReference>
<dbReference type="Pfam" id="PF05296">
    <property type="entry name" value="TAS2R"/>
    <property type="match status" value="1"/>
</dbReference>
<dbReference type="SUPFAM" id="SSF81321">
    <property type="entry name" value="Family A G protein-coupled receptor-like"/>
    <property type="match status" value="1"/>
</dbReference>
<evidence type="ECO:0000250" key="1"/>
<evidence type="ECO:0000250" key="2">
    <source>
        <dbReference type="UniProtKB" id="Q9NYV7"/>
    </source>
</evidence>
<evidence type="ECO:0000255" key="3"/>
<evidence type="ECO:0000305" key="4"/>
<feature type="chain" id="PRO_0000082266" description="Taste receptor type 2 member 16">
    <location>
        <begin position="1"/>
        <end position="291"/>
    </location>
</feature>
<feature type="topological domain" description="Extracellular" evidence="3">
    <location>
        <position position="1"/>
    </location>
</feature>
<feature type="transmembrane region" description="Helical; Name=1" evidence="3">
    <location>
        <begin position="2"/>
        <end position="22"/>
    </location>
</feature>
<feature type="topological domain" description="Cytoplasmic" evidence="3">
    <location>
        <begin position="23"/>
        <end position="41"/>
    </location>
</feature>
<feature type="transmembrane region" description="Helical; Name=2" evidence="3">
    <location>
        <begin position="42"/>
        <end position="62"/>
    </location>
</feature>
<feature type="topological domain" description="Extracellular" evidence="3">
    <location>
        <begin position="63"/>
        <end position="84"/>
    </location>
</feature>
<feature type="transmembrane region" description="Helical; Name=3" evidence="3">
    <location>
        <begin position="85"/>
        <end position="105"/>
    </location>
</feature>
<feature type="topological domain" description="Cytoplasmic" evidence="3">
    <location>
        <begin position="106"/>
        <end position="125"/>
    </location>
</feature>
<feature type="transmembrane region" description="Helical; Name=4" evidence="3">
    <location>
        <begin position="126"/>
        <end position="146"/>
    </location>
</feature>
<feature type="topological domain" description="Extracellular" evidence="3">
    <location>
        <begin position="147"/>
        <end position="182"/>
    </location>
</feature>
<feature type="transmembrane region" description="Helical; Name=5" evidence="3">
    <location>
        <begin position="183"/>
        <end position="203"/>
    </location>
</feature>
<feature type="topological domain" description="Cytoplasmic" evidence="3">
    <location>
        <begin position="204"/>
        <end position="228"/>
    </location>
</feature>
<feature type="transmembrane region" description="Helical; Name=6" evidence="3">
    <location>
        <begin position="229"/>
        <end position="249"/>
    </location>
</feature>
<feature type="topological domain" description="Extracellular" evidence="3">
    <location>
        <begin position="250"/>
        <end position="257"/>
    </location>
</feature>
<feature type="transmembrane region" description="Helical; Name=7" evidence="3">
    <location>
        <begin position="258"/>
        <end position="278"/>
    </location>
</feature>
<feature type="topological domain" description="Cytoplasmic" evidence="3">
    <location>
        <begin position="279"/>
        <end position="291"/>
    </location>
</feature>
<feature type="glycosylation site" description="N-linked (GlcNAc...) asparagine" evidence="3">
    <location>
        <position position="80"/>
    </location>
</feature>
<feature type="glycosylation site" description="N-linked (GlcNAc...) asparagine" evidence="3">
    <location>
        <position position="163"/>
    </location>
</feature>
<name>T2R16_PONPY</name>
<reference key="1">
    <citation type="journal article" date="2005" name="Mol. Biol. Evol.">
        <title>Evolution of bitter taste receptors in humans and apes.</title>
        <authorList>
            <person name="Fischer A."/>
            <person name="Gilad Y."/>
            <person name="Man O."/>
            <person name="Paeaebo S."/>
        </authorList>
    </citation>
    <scope>NUCLEOTIDE SEQUENCE [GENOMIC DNA]</scope>
</reference>
<keyword id="KW-1003">Cell membrane</keyword>
<keyword id="KW-0297">G-protein coupled receptor</keyword>
<keyword id="KW-0325">Glycoprotein</keyword>
<keyword id="KW-0472">Membrane</keyword>
<keyword id="KW-0675">Receptor</keyword>
<keyword id="KW-0716">Sensory transduction</keyword>
<keyword id="KW-0919">Taste</keyword>
<keyword id="KW-0807">Transducer</keyword>
<keyword id="KW-0812">Transmembrane</keyword>
<keyword id="KW-1133">Transmembrane helix</keyword>
<accession>Q645U1</accession>
<gene>
    <name type="primary">TAS2R16</name>
</gene>
<sequence>MIPIQLTVFFMIIYVLESLTIIVQSSLIVAVLGREWLQVRRLMPVDMILISLGISRFCLQWASMLNNFCSYLNLNYVLCNLTITWEFFNILTFWLNSLLTVFYCIKVSSFTHHIFLWVRWRILRWFPWILLGSLTIACVTIIPSAIGNYIQIQLLTMEHLPRNSTVTDRLEKFHQYQFQSHTVALVIPFILFLASTILLMASLTKQIQHHSTGHCNPSMKAHFTALRSLAILFIVFTSYFLIILITIIGTLFDKRCWLWVWEAFVYAFILMHSTSLMLSSPTLKRILKGKC</sequence>
<organism>
    <name type="scientific">Pongo pygmaeus</name>
    <name type="common">Bornean orangutan</name>
    <dbReference type="NCBI Taxonomy" id="9600"/>
    <lineage>
        <taxon>Eukaryota</taxon>
        <taxon>Metazoa</taxon>
        <taxon>Chordata</taxon>
        <taxon>Craniata</taxon>
        <taxon>Vertebrata</taxon>
        <taxon>Euteleostomi</taxon>
        <taxon>Mammalia</taxon>
        <taxon>Eutheria</taxon>
        <taxon>Euarchontoglires</taxon>
        <taxon>Primates</taxon>
        <taxon>Haplorrhini</taxon>
        <taxon>Catarrhini</taxon>
        <taxon>Hominidae</taxon>
        <taxon>Pongo</taxon>
    </lineage>
</organism>
<proteinExistence type="inferred from homology"/>
<comment type="function">
    <text evidence="1">Receptor that may play a role in the perception of bitterness and is gustducin-linked. May function as a bitter taste receptor for the phytonutrient beta glucopyranosides, some of which are toxic and some of which lower the risk of cancer and cardiovascular disease. The activity of this receptor may stimulate alpha gustducin, mediate PLC-beta-2 activation and lead to the gating of TRPM5 (By similarity).</text>
</comment>
<comment type="subunit">
    <text evidence="2">Interacts with RTP3 and RTP4.</text>
</comment>
<comment type="subcellular location">
    <subcellularLocation>
        <location evidence="2">Cell membrane</location>
        <topology evidence="3">Multi-pass membrane protein</topology>
    </subcellularLocation>
</comment>
<comment type="miscellaneous">
    <text>Most taste cells may be activated by a limited number of bitter compounds; individual taste cells can discriminate among bitter stimuli.</text>
</comment>
<comment type="similarity">
    <text evidence="4">Belongs to the G-protein coupled receptor T2R family.</text>
</comment>